<sequence>MAKKITAYIKLQVKAAQANPSPPVGPALGQHGVNIMEFCKAFNARTQGLEAGLPTPVIITVYSDRSFTFETKSTPASVLLKKAAGLTSGSARPNTVKVGTVTRAQLEEIAKTKNADLTAADMDAAVRTIAGSARSMGLNVEGV</sequence>
<name>RL11_PSEPF</name>
<protein>
    <recommendedName>
        <fullName evidence="1">Large ribosomal subunit protein uL11</fullName>
    </recommendedName>
    <alternativeName>
        <fullName evidence="2">50S ribosomal protein L11</fullName>
    </alternativeName>
</protein>
<comment type="function">
    <text evidence="1">Forms part of the ribosomal stalk which helps the ribosome interact with GTP-bound translation factors.</text>
</comment>
<comment type="subunit">
    <text evidence="1">Part of the ribosomal stalk of the 50S ribosomal subunit. Interacts with L10 and the large rRNA to form the base of the stalk. L10 forms an elongated spine to which L12 dimers bind in a sequential fashion forming a multimeric L10(L12)X complex.</text>
</comment>
<comment type="PTM">
    <text evidence="1">One or more lysine residues are methylated.</text>
</comment>
<comment type="similarity">
    <text evidence="1">Belongs to the universal ribosomal protein uL11 family.</text>
</comment>
<accession>Q3K5X7</accession>
<reference key="1">
    <citation type="journal article" date="2009" name="Genome Biol.">
        <title>Genomic and genetic analyses of diversity and plant interactions of Pseudomonas fluorescens.</title>
        <authorList>
            <person name="Silby M.W."/>
            <person name="Cerdeno-Tarraga A.M."/>
            <person name="Vernikos G.S."/>
            <person name="Giddens S.R."/>
            <person name="Jackson R.W."/>
            <person name="Preston G.M."/>
            <person name="Zhang X.-X."/>
            <person name="Moon C.D."/>
            <person name="Gehrig S.M."/>
            <person name="Godfrey S.A.C."/>
            <person name="Knight C.G."/>
            <person name="Malone J.G."/>
            <person name="Robinson Z."/>
            <person name="Spiers A.J."/>
            <person name="Harris S."/>
            <person name="Challis G.L."/>
            <person name="Yaxley A.M."/>
            <person name="Harris D."/>
            <person name="Seeger K."/>
            <person name="Murphy L."/>
            <person name="Rutter S."/>
            <person name="Squares R."/>
            <person name="Quail M.A."/>
            <person name="Saunders E."/>
            <person name="Mavromatis K."/>
            <person name="Brettin T.S."/>
            <person name="Bentley S.D."/>
            <person name="Hothersall J."/>
            <person name="Stephens E."/>
            <person name="Thomas C.M."/>
            <person name="Parkhill J."/>
            <person name="Levy S.B."/>
            <person name="Rainey P.B."/>
            <person name="Thomson N.R."/>
        </authorList>
    </citation>
    <scope>NUCLEOTIDE SEQUENCE [LARGE SCALE GENOMIC DNA]</scope>
    <source>
        <strain>Pf0-1</strain>
    </source>
</reference>
<gene>
    <name evidence="1" type="primary">rplK</name>
    <name type="ordered locus">Pfl01_5090</name>
</gene>
<organism>
    <name type="scientific">Pseudomonas fluorescens (strain Pf0-1)</name>
    <dbReference type="NCBI Taxonomy" id="205922"/>
    <lineage>
        <taxon>Bacteria</taxon>
        <taxon>Pseudomonadati</taxon>
        <taxon>Pseudomonadota</taxon>
        <taxon>Gammaproteobacteria</taxon>
        <taxon>Pseudomonadales</taxon>
        <taxon>Pseudomonadaceae</taxon>
        <taxon>Pseudomonas</taxon>
    </lineage>
</organism>
<feature type="chain" id="PRO_0000258188" description="Large ribosomal subunit protein uL11">
    <location>
        <begin position="1"/>
        <end position="143"/>
    </location>
</feature>
<evidence type="ECO:0000255" key="1">
    <source>
        <dbReference type="HAMAP-Rule" id="MF_00736"/>
    </source>
</evidence>
<evidence type="ECO:0000305" key="2"/>
<dbReference type="EMBL" id="CP000094">
    <property type="protein sequence ID" value="ABA76827.1"/>
    <property type="molecule type" value="Genomic_DNA"/>
</dbReference>
<dbReference type="RefSeq" id="WP_003228756.1">
    <property type="nucleotide sequence ID" value="NC_007492.2"/>
</dbReference>
<dbReference type="SMR" id="Q3K5X7"/>
<dbReference type="GeneID" id="93491425"/>
<dbReference type="KEGG" id="pfo:Pfl01_5090"/>
<dbReference type="eggNOG" id="COG0080">
    <property type="taxonomic scope" value="Bacteria"/>
</dbReference>
<dbReference type="HOGENOM" id="CLU_074237_2_0_6"/>
<dbReference type="Proteomes" id="UP000002704">
    <property type="component" value="Chromosome"/>
</dbReference>
<dbReference type="GO" id="GO:0022625">
    <property type="term" value="C:cytosolic large ribosomal subunit"/>
    <property type="evidence" value="ECO:0007669"/>
    <property type="project" value="TreeGrafter"/>
</dbReference>
<dbReference type="GO" id="GO:0070180">
    <property type="term" value="F:large ribosomal subunit rRNA binding"/>
    <property type="evidence" value="ECO:0007669"/>
    <property type="project" value="UniProtKB-UniRule"/>
</dbReference>
<dbReference type="GO" id="GO:0003735">
    <property type="term" value="F:structural constituent of ribosome"/>
    <property type="evidence" value="ECO:0007669"/>
    <property type="project" value="InterPro"/>
</dbReference>
<dbReference type="GO" id="GO:0006412">
    <property type="term" value="P:translation"/>
    <property type="evidence" value="ECO:0007669"/>
    <property type="project" value="UniProtKB-UniRule"/>
</dbReference>
<dbReference type="CDD" id="cd00349">
    <property type="entry name" value="Ribosomal_L11"/>
    <property type="match status" value="1"/>
</dbReference>
<dbReference type="FunFam" id="1.10.10.250:FF:000001">
    <property type="entry name" value="50S ribosomal protein L11"/>
    <property type="match status" value="1"/>
</dbReference>
<dbReference type="FunFam" id="3.30.1550.10:FF:000001">
    <property type="entry name" value="50S ribosomal protein L11"/>
    <property type="match status" value="1"/>
</dbReference>
<dbReference type="Gene3D" id="1.10.10.250">
    <property type="entry name" value="Ribosomal protein L11, C-terminal domain"/>
    <property type="match status" value="1"/>
</dbReference>
<dbReference type="Gene3D" id="3.30.1550.10">
    <property type="entry name" value="Ribosomal protein L11/L12, N-terminal domain"/>
    <property type="match status" value="1"/>
</dbReference>
<dbReference type="HAMAP" id="MF_00736">
    <property type="entry name" value="Ribosomal_uL11"/>
    <property type="match status" value="1"/>
</dbReference>
<dbReference type="InterPro" id="IPR000911">
    <property type="entry name" value="Ribosomal_uL11"/>
</dbReference>
<dbReference type="InterPro" id="IPR006519">
    <property type="entry name" value="Ribosomal_uL11_bac-typ"/>
</dbReference>
<dbReference type="InterPro" id="IPR020783">
    <property type="entry name" value="Ribosomal_uL11_C"/>
</dbReference>
<dbReference type="InterPro" id="IPR036769">
    <property type="entry name" value="Ribosomal_uL11_C_sf"/>
</dbReference>
<dbReference type="InterPro" id="IPR020785">
    <property type="entry name" value="Ribosomal_uL11_CS"/>
</dbReference>
<dbReference type="InterPro" id="IPR020784">
    <property type="entry name" value="Ribosomal_uL11_N"/>
</dbReference>
<dbReference type="InterPro" id="IPR036796">
    <property type="entry name" value="Ribosomal_uL11_N_sf"/>
</dbReference>
<dbReference type="NCBIfam" id="TIGR01632">
    <property type="entry name" value="L11_bact"/>
    <property type="match status" value="1"/>
</dbReference>
<dbReference type="PANTHER" id="PTHR11661">
    <property type="entry name" value="60S RIBOSOMAL PROTEIN L12"/>
    <property type="match status" value="1"/>
</dbReference>
<dbReference type="PANTHER" id="PTHR11661:SF1">
    <property type="entry name" value="LARGE RIBOSOMAL SUBUNIT PROTEIN UL11M"/>
    <property type="match status" value="1"/>
</dbReference>
<dbReference type="Pfam" id="PF00298">
    <property type="entry name" value="Ribosomal_L11"/>
    <property type="match status" value="1"/>
</dbReference>
<dbReference type="Pfam" id="PF03946">
    <property type="entry name" value="Ribosomal_L11_N"/>
    <property type="match status" value="1"/>
</dbReference>
<dbReference type="SMART" id="SM00649">
    <property type="entry name" value="RL11"/>
    <property type="match status" value="1"/>
</dbReference>
<dbReference type="SUPFAM" id="SSF54747">
    <property type="entry name" value="Ribosomal L11/L12e N-terminal domain"/>
    <property type="match status" value="1"/>
</dbReference>
<dbReference type="SUPFAM" id="SSF46906">
    <property type="entry name" value="Ribosomal protein L11, C-terminal domain"/>
    <property type="match status" value="1"/>
</dbReference>
<dbReference type="PROSITE" id="PS00359">
    <property type="entry name" value="RIBOSOMAL_L11"/>
    <property type="match status" value="1"/>
</dbReference>
<proteinExistence type="inferred from homology"/>
<keyword id="KW-0488">Methylation</keyword>
<keyword id="KW-0687">Ribonucleoprotein</keyword>
<keyword id="KW-0689">Ribosomal protein</keyword>
<keyword id="KW-0694">RNA-binding</keyword>
<keyword id="KW-0699">rRNA-binding</keyword>